<feature type="chain" id="PRO_0000317778" description="ORF2/4 protein">
    <location>
        <begin position="1"/>
        <end position="290"/>
    </location>
</feature>
<feature type="region of interest" description="Disordered" evidence="1">
    <location>
        <begin position="67"/>
        <end position="218"/>
    </location>
</feature>
<feature type="compositionally biased region" description="Basic and acidic residues" evidence="1">
    <location>
        <begin position="121"/>
        <end position="130"/>
    </location>
</feature>
<feature type="compositionally biased region" description="Low complexity" evidence="1">
    <location>
        <begin position="181"/>
        <end position="190"/>
    </location>
</feature>
<feature type="compositionally biased region" description="Polar residues" evidence="1">
    <location>
        <begin position="191"/>
        <end position="200"/>
    </location>
</feature>
<evidence type="ECO:0000256" key="1">
    <source>
        <dbReference type="SAM" id="MobiDB-lite"/>
    </source>
</evidence>
<proteinExistence type="predicted"/>
<gene>
    <name type="ORF">ORF2/4</name>
</gene>
<accession>P0C675</accession>
<name>ORF24_TTVV2</name>
<reference key="1">
    <citation type="journal article" date="1999" name="J. Virol.">
        <title>Quasispecies of TT virus (TTV) with sequence divergence in hypervariable regions of the capsid protein in chronic TTV infection.</title>
        <authorList>
            <person name="Nishizawa T."/>
            <person name="Okamoto H."/>
            <person name="Tsuda F."/>
            <person name="Aikawa T."/>
            <person name="Sugai Y."/>
            <person name="Konishi K."/>
            <person name="Akahane Y."/>
            <person name="Ukita M."/>
            <person name="Tanaka T."/>
            <person name="Miyakawa Y."/>
            <person name="Mayumi M."/>
        </authorList>
    </citation>
    <scope>NUCLEOTIDE SEQUENCE [GENOMIC DNA]</scope>
</reference>
<reference key="2">
    <citation type="journal article" date="2007" name="Rev. Med. Virol.">
        <title>Torque teno virus (TTV): current status.</title>
        <authorList>
            <person name="Hino S."/>
            <person name="Miyata H."/>
        </authorList>
    </citation>
    <scope>REVIEW</scope>
</reference>
<protein>
    <recommendedName>
        <fullName>ORF2/4 protein</fullName>
    </recommendedName>
</protein>
<keyword id="KW-1185">Reference proteome</keyword>
<sequence>MWTPPRNDQQYLNWQWYSSILSSHAAMCGCPDAVAHFNHLASVLRAPQNPPPPGPQRNLPLRRLPALPAAPEAPGDRAPWPMAGGAEGEDGGAGGDADHGGAAGGPEDADLLDAVAAAETRPQETQEGHRGVPLQPRRGAKRKLTFPPSQAPQTSPPVGRLAAGGKRVAKLRGRDADRLPAAQAAAAATANPGSQTQTPVQPSPKNPPKSRYQPYLVTKGGGSSILISNSTINMFGDPKPYNPSSNDWKEEYEACRIWDRPPRGNLRDPPFYPWAPKENQYRVNFKLGFQ</sequence>
<organism>
    <name type="scientific">Torque teno virus (isolate Human/Japan/TRM1/1999)</name>
    <name type="common">TTV</name>
    <name type="synonym">Torque teno virus genotype 1a</name>
    <dbReference type="NCBI Taxonomy" id="486275"/>
    <lineage>
        <taxon>Viruses</taxon>
        <taxon>Viruses incertae sedis</taxon>
        <taxon>Anelloviridae</taxon>
        <taxon>Torque teno virus</taxon>
    </lineage>
</organism>
<organismHost>
    <name type="scientific">Homo sapiens</name>
    <name type="common">Human</name>
    <dbReference type="NCBI Taxonomy" id="9606"/>
</organismHost>
<dbReference type="EMBL" id="AB026346">
    <property type="status" value="NOT_ANNOTATED_CDS"/>
    <property type="molecule type" value="Genomic_DNA"/>
</dbReference>
<dbReference type="EMBL" id="AB026347">
    <property type="status" value="NOT_ANNOTATED_CDS"/>
    <property type="molecule type" value="Genomic_DNA"/>
</dbReference>
<dbReference type="Proteomes" id="UP000008256">
    <property type="component" value="Genome"/>
</dbReference>
<dbReference type="InterPro" id="IPR004118">
    <property type="entry name" value="HEV_TT_vir_Orf2/Gyrovir_Vp2_N"/>
</dbReference>
<dbReference type="Pfam" id="PF02957">
    <property type="entry name" value="TT_ORF2-like"/>
    <property type="match status" value="1"/>
</dbReference>